<reference key="1">
    <citation type="journal article" date="2001" name="Science">
        <title>Mechanisms of evolution in Rickettsia conorii and R. prowazekii.</title>
        <authorList>
            <person name="Ogata H."/>
            <person name="Audic S."/>
            <person name="Renesto-Audiffren P."/>
            <person name="Fournier P.-E."/>
            <person name="Barbe V."/>
            <person name="Samson D."/>
            <person name="Roux V."/>
            <person name="Cossart P."/>
            <person name="Weissenbach J."/>
            <person name="Claverie J.-M."/>
            <person name="Raoult D."/>
        </authorList>
    </citation>
    <scope>NUCLEOTIDE SEQUENCE [LARGE SCALE GENOMIC DNA]</scope>
    <source>
        <strain>ATCC VR-613 / Malish 7</strain>
    </source>
</reference>
<feature type="chain" id="PRO_0000286451" description="Penicillin-binding protein 1A">
    <location>
        <begin position="1"/>
        <end position="790"/>
    </location>
</feature>
<feature type="topological domain" description="Cytoplasmic" evidence="4">
    <location>
        <begin position="1"/>
        <end position="6"/>
    </location>
</feature>
<feature type="transmembrane region" description="Helical; Signal-anchor for type II membrane protein" evidence="4">
    <location>
        <begin position="7"/>
        <end position="27"/>
    </location>
</feature>
<feature type="topological domain" description="Periplasmic" evidence="4">
    <location>
        <begin position="28"/>
        <end position="790"/>
    </location>
</feature>
<feature type="region of interest" description="Transglycosylase">
    <location>
        <begin position="49"/>
        <end position="220"/>
    </location>
</feature>
<feature type="region of interest" description="Transpeptidase">
    <location>
        <begin position="398"/>
        <end position="711"/>
    </location>
</feature>
<feature type="active site" description="Proton donor; for transglycosylase activity" evidence="3">
    <location>
        <position position="87"/>
    </location>
</feature>
<feature type="active site" description="Acyl-ester intermediate; for transpeptidase activity" evidence="3">
    <location>
        <position position="457"/>
    </location>
</feature>
<gene>
    <name type="primary">mrcA</name>
    <name type="synonym">ponA</name>
    <name type="ordered locus">RC1245</name>
</gene>
<evidence type="ECO:0000250" key="1"/>
<evidence type="ECO:0000250" key="2">
    <source>
        <dbReference type="UniProtKB" id="P02918"/>
    </source>
</evidence>
<evidence type="ECO:0000250" key="3">
    <source>
        <dbReference type="UniProtKB" id="P02919"/>
    </source>
</evidence>
<evidence type="ECO:0000255" key="4"/>
<evidence type="ECO:0000305" key="5"/>
<protein>
    <recommendedName>
        <fullName>Penicillin-binding protein 1A</fullName>
        <shortName>PBP-1a</shortName>
        <shortName>PBP1a</shortName>
    </recommendedName>
    <domain>
        <recommendedName>
            <fullName>Penicillin-insensitive transglycosylase</fullName>
            <ecNumber evidence="2">2.4.99.28</ecNumber>
        </recommendedName>
        <alternativeName>
            <fullName>Peptidoglycan TGase</fullName>
        </alternativeName>
    </domain>
    <domain>
        <recommendedName>
            <fullName>Penicillin-sensitive transpeptidase</fullName>
            <ecNumber evidence="2">3.4.16.4</ecNumber>
        </recommendedName>
        <alternativeName>
            <fullName>DD-transpeptidase</fullName>
        </alternativeName>
    </domain>
</protein>
<name>PBPA_RICCN</name>
<dbReference type="EC" id="2.4.99.28" evidence="2"/>
<dbReference type="EC" id="3.4.16.4" evidence="2"/>
<dbReference type="EMBL" id="AE006914">
    <property type="protein sequence ID" value="AAL03783.1"/>
    <property type="molecule type" value="Genomic_DNA"/>
</dbReference>
<dbReference type="PIR" id="E97855">
    <property type="entry name" value="E97855"/>
</dbReference>
<dbReference type="RefSeq" id="WP_010977809.1">
    <property type="nucleotide sequence ID" value="NC_003103.1"/>
</dbReference>
<dbReference type="SMR" id="Q92G78"/>
<dbReference type="CAZy" id="GT51">
    <property type="family name" value="Glycosyltransferase Family 51"/>
</dbReference>
<dbReference type="GeneID" id="928398"/>
<dbReference type="KEGG" id="rco:RC1245"/>
<dbReference type="PATRIC" id="fig|272944.4.peg.1427"/>
<dbReference type="HOGENOM" id="CLU_006354_2_4_5"/>
<dbReference type="UniPathway" id="UPA00219"/>
<dbReference type="Proteomes" id="UP000000816">
    <property type="component" value="Chromosome"/>
</dbReference>
<dbReference type="GO" id="GO:0030288">
    <property type="term" value="C:outer membrane-bounded periplasmic space"/>
    <property type="evidence" value="ECO:0007669"/>
    <property type="project" value="TreeGrafter"/>
</dbReference>
<dbReference type="GO" id="GO:0005886">
    <property type="term" value="C:plasma membrane"/>
    <property type="evidence" value="ECO:0007669"/>
    <property type="project" value="UniProtKB-SubCell"/>
</dbReference>
<dbReference type="GO" id="GO:0008658">
    <property type="term" value="F:penicillin binding"/>
    <property type="evidence" value="ECO:0007669"/>
    <property type="project" value="InterPro"/>
</dbReference>
<dbReference type="GO" id="GO:0008955">
    <property type="term" value="F:peptidoglycan glycosyltransferase activity"/>
    <property type="evidence" value="ECO:0007669"/>
    <property type="project" value="RHEA"/>
</dbReference>
<dbReference type="GO" id="GO:0009002">
    <property type="term" value="F:serine-type D-Ala-D-Ala carboxypeptidase activity"/>
    <property type="evidence" value="ECO:0007669"/>
    <property type="project" value="UniProtKB-EC"/>
</dbReference>
<dbReference type="GO" id="GO:0071555">
    <property type="term" value="P:cell wall organization"/>
    <property type="evidence" value="ECO:0007669"/>
    <property type="project" value="UniProtKB-KW"/>
</dbReference>
<dbReference type="GO" id="GO:0009252">
    <property type="term" value="P:peptidoglycan biosynthetic process"/>
    <property type="evidence" value="ECO:0007669"/>
    <property type="project" value="UniProtKB-UniPathway"/>
</dbReference>
<dbReference type="GO" id="GO:0006508">
    <property type="term" value="P:proteolysis"/>
    <property type="evidence" value="ECO:0007669"/>
    <property type="project" value="UniProtKB-KW"/>
</dbReference>
<dbReference type="GO" id="GO:0008360">
    <property type="term" value="P:regulation of cell shape"/>
    <property type="evidence" value="ECO:0007669"/>
    <property type="project" value="UniProtKB-KW"/>
</dbReference>
<dbReference type="GO" id="GO:0046677">
    <property type="term" value="P:response to antibiotic"/>
    <property type="evidence" value="ECO:0007669"/>
    <property type="project" value="UniProtKB-KW"/>
</dbReference>
<dbReference type="FunFam" id="1.10.3810.10:FF:000003">
    <property type="entry name" value="Penicillin-binding protein 1a"/>
    <property type="match status" value="1"/>
</dbReference>
<dbReference type="Gene3D" id="1.10.3810.10">
    <property type="entry name" value="Biosynthetic peptidoglycan transglycosylase-like"/>
    <property type="match status" value="1"/>
</dbReference>
<dbReference type="Gene3D" id="3.40.710.10">
    <property type="entry name" value="DD-peptidase/beta-lactamase superfamily"/>
    <property type="match status" value="2"/>
</dbReference>
<dbReference type="InterPro" id="IPR012338">
    <property type="entry name" value="Beta-lactam/transpept-like"/>
</dbReference>
<dbReference type="InterPro" id="IPR001264">
    <property type="entry name" value="Glyco_trans_51"/>
</dbReference>
<dbReference type="InterPro" id="IPR050396">
    <property type="entry name" value="Glycosyltr_51/Transpeptidase"/>
</dbReference>
<dbReference type="InterPro" id="IPR023346">
    <property type="entry name" value="Lysozyme-like_dom_sf"/>
</dbReference>
<dbReference type="InterPro" id="IPR036950">
    <property type="entry name" value="PBP_transglycosylase"/>
</dbReference>
<dbReference type="InterPro" id="IPR031376">
    <property type="entry name" value="PCB_OB"/>
</dbReference>
<dbReference type="InterPro" id="IPR001460">
    <property type="entry name" value="PCN-bd_Tpept"/>
</dbReference>
<dbReference type="NCBIfam" id="TIGR02074">
    <property type="entry name" value="PBP_1a_fam"/>
    <property type="match status" value="1"/>
</dbReference>
<dbReference type="PANTHER" id="PTHR32282">
    <property type="entry name" value="BINDING PROTEIN TRANSPEPTIDASE, PUTATIVE-RELATED"/>
    <property type="match status" value="1"/>
</dbReference>
<dbReference type="PANTHER" id="PTHR32282:SF27">
    <property type="entry name" value="PENICILLIN-BINDING PROTEIN 1A"/>
    <property type="match status" value="1"/>
</dbReference>
<dbReference type="Pfam" id="PF17092">
    <property type="entry name" value="PCB_OB"/>
    <property type="match status" value="1"/>
</dbReference>
<dbReference type="Pfam" id="PF00912">
    <property type="entry name" value="Transgly"/>
    <property type="match status" value="1"/>
</dbReference>
<dbReference type="Pfam" id="PF00905">
    <property type="entry name" value="Transpeptidase"/>
    <property type="match status" value="1"/>
</dbReference>
<dbReference type="SUPFAM" id="SSF56601">
    <property type="entry name" value="beta-lactamase/transpeptidase-like"/>
    <property type="match status" value="1"/>
</dbReference>
<dbReference type="SUPFAM" id="SSF53955">
    <property type="entry name" value="Lysozyme-like"/>
    <property type="match status" value="1"/>
</dbReference>
<sequence length="790" mass="88684">MYKSLLFCLKIFVFLILVGCGITAYIIYHYSRDLPDYSQLARYYPPSVTRIYSRDGKLMEEYAFERRVFVPINSVPSSLIESFIAAEDKNFYNHPGVDLFGIVRAAFLNISNYLHHRRMEGASTITQQVVKNFLLTNEVSLERKIKEAILSYMISRVFTKDQILELYLNQTFFGRGAYGVAVAAQNYFNKSVEELTIAESAFIAALPKAPSELNPERNYARVKARRDYVITRMFEDGYITRDAAKEAMDSPIVLRKRAKEETVTADYYAAQVREEVIRMLNSKEVFYTGGLTIITSLDAKMQQLAENSLRKGLREFDRRCGFRKPIANISLDNWQGELKKLPTPPSLLEYKLAVVLDVADNHVEIGLIDGSKSKMPIAEMKWARSNFKSVKTLLKKGDVIVVEAIKEGYALRQIPEVNGAIMVMNPNTGQVLASVGGYDFSTSKFDRVTQALRQPGSLSKTFVYLAALENGVKPNQIFNDGPIEISQGPGMPSWRPKNYEGKFLGEITMRTGLEKSRNLITVRVATAVGLTKIVDIIKRFGINNEPKKVYSMVLGSIETTLSRMTNAYAIIANGGKKVEPHFVELIKDRNGKIIYRRDDRECLACNVSDSNLDTAILEIPKEYIYRVTDEASDYQITSFLTGAIDRGTGYAAKKLGKIIGGKTGTSNDSKDTWFVGFTPKIVVGSYVGYDTPKELGKRATGSNVVLPIFIDFMSNAYKDKPSLPFKVPDSIKLIAVDSATGKITPGGTVIEAFKVNNVQMLENEDMIDNQDNNDIFDYVPSKEDQSQEIY</sequence>
<accession>Q92G78</accession>
<organism>
    <name type="scientific">Rickettsia conorii (strain ATCC VR-613 / Malish 7)</name>
    <dbReference type="NCBI Taxonomy" id="272944"/>
    <lineage>
        <taxon>Bacteria</taxon>
        <taxon>Pseudomonadati</taxon>
        <taxon>Pseudomonadota</taxon>
        <taxon>Alphaproteobacteria</taxon>
        <taxon>Rickettsiales</taxon>
        <taxon>Rickettsiaceae</taxon>
        <taxon>Rickettsieae</taxon>
        <taxon>Rickettsia</taxon>
        <taxon>spotted fever group</taxon>
    </lineage>
</organism>
<proteinExistence type="inferred from homology"/>
<comment type="function">
    <text evidence="1">Cell wall formation. Synthesis of cross-linked peptidoglycan from the lipid intermediates. The enzyme has a penicillin-insensitive transglycosylase N-terminal domain (formation of linear glycan strands) and a penicillin-sensitive transpeptidase C-terminal domain (cross-linking of the peptide subunits).</text>
</comment>
<comment type="catalytic activity">
    <reaction evidence="2">
        <text>[GlcNAc-(1-&gt;4)-Mur2Ac(oyl-L-Ala-gamma-D-Glu-L-Lys-D-Ala-D-Ala)](n)-di-trans,octa-cis-undecaprenyl diphosphate + beta-D-GlcNAc-(1-&gt;4)-Mur2Ac(oyl-L-Ala-gamma-D-Glu-L-Lys-D-Ala-D-Ala)-di-trans,octa-cis-undecaprenyl diphosphate = [GlcNAc-(1-&gt;4)-Mur2Ac(oyl-L-Ala-gamma-D-Glu-L-Lys-D-Ala-D-Ala)](n+1)-di-trans,octa-cis-undecaprenyl diphosphate + di-trans,octa-cis-undecaprenyl diphosphate + H(+)</text>
        <dbReference type="Rhea" id="RHEA:23708"/>
        <dbReference type="Rhea" id="RHEA-COMP:9602"/>
        <dbReference type="Rhea" id="RHEA-COMP:9603"/>
        <dbReference type="ChEBI" id="CHEBI:15378"/>
        <dbReference type="ChEBI" id="CHEBI:58405"/>
        <dbReference type="ChEBI" id="CHEBI:60033"/>
        <dbReference type="ChEBI" id="CHEBI:78435"/>
        <dbReference type="EC" id="2.4.99.28"/>
    </reaction>
</comment>
<comment type="catalytic activity">
    <reaction evidence="2">
        <text>Preferential cleavage: (Ac)2-L-Lys-D-Ala-|-D-Ala. Also transpeptidation of peptidyl-alanyl moieties that are N-acyl substituents of D-alanine.</text>
        <dbReference type="EC" id="3.4.16.4"/>
    </reaction>
</comment>
<comment type="pathway">
    <text>Cell wall biogenesis; peptidoglycan biosynthesis.</text>
</comment>
<comment type="subcellular location">
    <subcellularLocation>
        <location evidence="1">Cell inner membrane</location>
        <topology evidence="1">Single-pass type II membrane protein</topology>
    </subcellularLocation>
</comment>
<comment type="similarity">
    <text evidence="5">In the N-terminal section; belongs to the glycosyltransferase 51 family.</text>
</comment>
<comment type="similarity">
    <text evidence="5">In the C-terminal section; belongs to the transpeptidase family.</text>
</comment>
<keyword id="KW-0046">Antibiotic resistance</keyword>
<keyword id="KW-0121">Carboxypeptidase</keyword>
<keyword id="KW-0997">Cell inner membrane</keyword>
<keyword id="KW-1003">Cell membrane</keyword>
<keyword id="KW-0133">Cell shape</keyword>
<keyword id="KW-0961">Cell wall biogenesis/degradation</keyword>
<keyword id="KW-0328">Glycosyltransferase</keyword>
<keyword id="KW-0378">Hydrolase</keyword>
<keyword id="KW-0472">Membrane</keyword>
<keyword id="KW-0511">Multifunctional enzyme</keyword>
<keyword id="KW-0573">Peptidoglycan synthesis</keyword>
<keyword id="KW-0645">Protease</keyword>
<keyword id="KW-0735">Signal-anchor</keyword>
<keyword id="KW-0808">Transferase</keyword>
<keyword id="KW-0812">Transmembrane</keyword>
<keyword id="KW-1133">Transmembrane helix</keyword>